<keyword id="KW-0414">Isoprene biosynthesis</keyword>
<keyword id="KW-0548">Nucleotidyltransferase</keyword>
<keyword id="KW-0808">Transferase</keyword>
<accession>B7GMX1</accession>
<accession>E8MPD0</accession>
<comment type="function">
    <text evidence="1">Catalyzes the formation of 4-diphosphocytidyl-2-C-methyl-D-erythritol from CTP and 2-C-methyl-D-erythritol 4-phosphate (MEP).</text>
</comment>
<comment type="catalytic activity">
    <reaction evidence="1">
        <text>2-C-methyl-D-erythritol 4-phosphate + CTP + H(+) = 4-CDP-2-C-methyl-D-erythritol + diphosphate</text>
        <dbReference type="Rhea" id="RHEA:13429"/>
        <dbReference type="ChEBI" id="CHEBI:15378"/>
        <dbReference type="ChEBI" id="CHEBI:33019"/>
        <dbReference type="ChEBI" id="CHEBI:37563"/>
        <dbReference type="ChEBI" id="CHEBI:57823"/>
        <dbReference type="ChEBI" id="CHEBI:58262"/>
        <dbReference type="EC" id="2.7.7.60"/>
    </reaction>
</comment>
<comment type="pathway">
    <text evidence="1">Isoprenoid biosynthesis; isopentenyl diphosphate biosynthesis via DXP pathway; isopentenyl diphosphate from 1-deoxy-D-xylulose 5-phosphate: step 2/6.</text>
</comment>
<comment type="similarity">
    <text evidence="1">Belongs to the IspD/TarI cytidylyltransferase family. IspD subfamily.</text>
</comment>
<reference key="1">
    <citation type="journal article" date="2008" name="Proc. Natl. Acad. Sci. U.S.A.">
        <title>The genome sequence of Bifidobacterium longum subsp. infantis reveals adaptations for milk utilization within the infant microbiome.</title>
        <authorList>
            <person name="Sela D.A."/>
            <person name="Chapman J."/>
            <person name="Adeuya A."/>
            <person name="Kim J.H."/>
            <person name="Chen F."/>
            <person name="Whitehead T.R."/>
            <person name="Lapidus A."/>
            <person name="Rokhsar D.S."/>
            <person name="Lebrilla C.B."/>
            <person name="German J.B."/>
            <person name="Price N.P."/>
            <person name="Richardson P.M."/>
            <person name="Mills D.A."/>
        </authorList>
    </citation>
    <scope>NUCLEOTIDE SEQUENCE [LARGE SCALE GENOMIC DNA]</scope>
    <source>
        <strain>ATCC 15697 / DSM 20088 / JCM 1222 / NCTC 11817 / S12</strain>
    </source>
</reference>
<reference key="2">
    <citation type="journal article" date="2011" name="Nature">
        <title>Bifidobacteria can protect from enteropathogenic infection through production of acetate.</title>
        <authorList>
            <person name="Fukuda S."/>
            <person name="Toh H."/>
            <person name="Hase K."/>
            <person name="Oshima K."/>
            <person name="Nakanishi Y."/>
            <person name="Yoshimura K."/>
            <person name="Tobe T."/>
            <person name="Clarke J.M."/>
            <person name="Topping D.L."/>
            <person name="Suzuki T."/>
            <person name="Taylor T.D."/>
            <person name="Itoh K."/>
            <person name="Kikuchi J."/>
            <person name="Morita H."/>
            <person name="Hattori M."/>
            <person name="Ohno H."/>
        </authorList>
    </citation>
    <scope>NUCLEOTIDE SEQUENCE [LARGE SCALE GENOMIC DNA]</scope>
    <source>
        <strain>ATCC 15697 / DSM 20088 / JCM 1222 / NCTC 11817 / S12</strain>
    </source>
</reference>
<dbReference type="EC" id="2.7.7.60" evidence="1"/>
<dbReference type="EMBL" id="CP001095">
    <property type="protein sequence ID" value="ACJ51477.1"/>
    <property type="molecule type" value="Genomic_DNA"/>
</dbReference>
<dbReference type="EMBL" id="AP010889">
    <property type="protein sequence ID" value="BAJ67954.1"/>
    <property type="molecule type" value="Genomic_DNA"/>
</dbReference>
<dbReference type="RefSeq" id="WP_012576784.1">
    <property type="nucleotide sequence ID" value="NZ_JDTT01000012.1"/>
</dbReference>
<dbReference type="SMR" id="B7GMX1"/>
<dbReference type="KEGG" id="bln:Blon_0353"/>
<dbReference type="KEGG" id="blon:BLIJ_0360"/>
<dbReference type="PATRIC" id="fig|391904.8.peg.364"/>
<dbReference type="HOGENOM" id="CLU_061281_2_1_11"/>
<dbReference type="UniPathway" id="UPA00056">
    <property type="reaction ID" value="UER00093"/>
</dbReference>
<dbReference type="Proteomes" id="UP000001360">
    <property type="component" value="Chromosome"/>
</dbReference>
<dbReference type="GO" id="GO:0050518">
    <property type="term" value="F:2-C-methyl-D-erythritol 4-phosphate cytidylyltransferase activity"/>
    <property type="evidence" value="ECO:0007669"/>
    <property type="project" value="UniProtKB-UniRule"/>
</dbReference>
<dbReference type="GO" id="GO:0019288">
    <property type="term" value="P:isopentenyl diphosphate biosynthetic process, methylerythritol 4-phosphate pathway"/>
    <property type="evidence" value="ECO:0007669"/>
    <property type="project" value="UniProtKB-UniRule"/>
</dbReference>
<dbReference type="CDD" id="cd02516">
    <property type="entry name" value="CDP-ME_synthetase"/>
    <property type="match status" value="1"/>
</dbReference>
<dbReference type="Gene3D" id="3.90.550.10">
    <property type="entry name" value="Spore Coat Polysaccharide Biosynthesis Protein SpsA, Chain A"/>
    <property type="match status" value="1"/>
</dbReference>
<dbReference type="HAMAP" id="MF_00108">
    <property type="entry name" value="IspD"/>
    <property type="match status" value="1"/>
</dbReference>
<dbReference type="InterPro" id="IPR001228">
    <property type="entry name" value="IspD"/>
</dbReference>
<dbReference type="InterPro" id="IPR034683">
    <property type="entry name" value="IspD/TarI"/>
</dbReference>
<dbReference type="InterPro" id="IPR050088">
    <property type="entry name" value="IspD/TarI_cytidylyltransf_bact"/>
</dbReference>
<dbReference type="InterPro" id="IPR018294">
    <property type="entry name" value="ISPD_synthase_CS"/>
</dbReference>
<dbReference type="InterPro" id="IPR029044">
    <property type="entry name" value="Nucleotide-diphossugar_trans"/>
</dbReference>
<dbReference type="PANTHER" id="PTHR32125">
    <property type="entry name" value="2-C-METHYL-D-ERYTHRITOL 4-PHOSPHATE CYTIDYLYLTRANSFERASE, CHLOROPLASTIC"/>
    <property type="match status" value="1"/>
</dbReference>
<dbReference type="PANTHER" id="PTHR32125:SF4">
    <property type="entry name" value="2-C-METHYL-D-ERYTHRITOL 4-PHOSPHATE CYTIDYLYLTRANSFERASE, CHLOROPLASTIC"/>
    <property type="match status" value="1"/>
</dbReference>
<dbReference type="Pfam" id="PF01128">
    <property type="entry name" value="IspD"/>
    <property type="match status" value="1"/>
</dbReference>
<dbReference type="SUPFAM" id="SSF53448">
    <property type="entry name" value="Nucleotide-diphospho-sugar transferases"/>
    <property type="match status" value="1"/>
</dbReference>
<dbReference type="PROSITE" id="PS01295">
    <property type="entry name" value="ISPD"/>
    <property type="match status" value="1"/>
</dbReference>
<evidence type="ECO:0000255" key="1">
    <source>
        <dbReference type="HAMAP-Rule" id="MF_00108"/>
    </source>
</evidence>
<evidence type="ECO:0000256" key="2">
    <source>
        <dbReference type="SAM" id="MobiDB-lite"/>
    </source>
</evidence>
<feature type="chain" id="PRO_1000191050" description="2-C-methyl-D-erythritol 4-phosphate cytidylyltransferase">
    <location>
        <begin position="1"/>
        <end position="291"/>
    </location>
</feature>
<feature type="region of interest" description="Disordered" evidence="2">
    <location>
        <begin position="1"/>
        <end position="23"/>
    </location>
</feature>
<feature type="site" description="Transition state stabilizer" evidence="1">
    <location>
        <position position="43"/>
    </location>
</feature>
<feature type="site" description="Transition state stabilizer" evidence="1">
    <location>
        <position position="50"/>
    </location>
</feature>
<feature type="site" description="Positions MEP for the nucleophilic attack" evidence="1">
    <location>
        <position position="189"/>
    </location>
</feature>
<feature type="site" description="Positions MEP for the nucleophilic attack" evidence="1">
    <location>
        <position position="248"/>
    </location>
</feature>
<proteinExistence type="inferred from homology"/>
<sequence length="291" mass="31394">MTERDFDTPVETPTVQPAPAQGTKPAQTVPVVAVVLAAGFGTRFDPDNPKQLVSVGGKPIVCWSIDAFEHCDRVSDIVVVVNPKVRGEVETLVGEMGYTKVRVIIDGGDERVDSTATALDMLATAGIPDDAKILIHDAVRPFVEQSAIDGSIDALDQFTAATVAYASTDTVLLTEDLGDLKVVKSVPDRPNTFRAQTPQSFRFATIRHAYDLAAADPDFHPTDDTRVVVDYLPDEPVAIVSGAETNLKITTLEDIPTAERIAEEILGRDPKEEARARMHALLAQAAGQMHR</sequence>
<organism>
    <name type="scientific">Bifidobacterium longum subsp. infantis (strain ATCC 15697 / DSM 20088 / JCM 1222 / NCTC 11817 / S12)</name>
    <dbReference type="NCBI Taxonomy" id="391904"/>
    <lineage>
        <taxon>Bacteria</taxon>
        <taxon>Bacillati</taxon>
        <taxon>Actinomycetota</taxon>
        <taxon>Actinomycetes</taxon>
        <taxon>Bifidobacteriales</taxon>
        <taxon>Bifidobacteriaceae</taxon>
        <taxon>Bifidobacterium</taxon>
    </lineage>
</organism>
<gene>
    <name evidence="1" type="primary">ispD</name>
    <name type="ordered locus">Blon_0353</name>
    <name type="ordered locus">BLIJ_0360</name>
</gene>
<protein>
    <recommendedName>
        <fullName evidence="1">2-C-methyl-D-erythritol 4-phosphate cytidylyltransferase</fullName>
        <ecNumber evidence="1">2.7.7.60</ecNumber>
    </recommendedName>
    <alternativeName>
        <fullName evidence="1">4-diphosphocytidyl-2C-methyl-D-erythritol synthase</fullName>
    </alternativeName>
    <alternativeName>
        <fullName evidence="1">MEP cytidylyltransferase</fullName>
        <shortName evidence="1">MCT</shortName>
    </alternativeName>
</protein>
<name>ISPD_BIFLS</name>